<feature type="chain" id="PRO_0000394673" description="AF4/FMR2 family member lilli">
    <location>
        <begin position="1"/>
        <end position="1679"/>
    </location>
</feature>
<feature type="DNA-binding region" description="A.T hook" evidence="2">
    <location>
        <begin position="859"/>
        <end position="871"/>
    </location>
</feature>
<feature type="region of interest" description="Disordered" evidence="3">
    <location>
        <begin position="1"/>
        <end position="21"/>
    </location>
</feature>
<feature type="region of interest" description="Disordered" evidence="3">
    <location>
        <begin position="55"/>
        <end position="78"/>
    </location>
</feature>
<feature type="region of interest" description="Disordered" evidence="3">
    <location>
        <begin position="124"/>
        <end position="305"/>
    </location>
</feature>
<feature type="region of interest" description="Disordered" evidence="3">
    <location>
        <begin position="406"/>
        <end position="539"/>
    </location>
</feature>
<feature type="region of interest" description="Disordered" evidence="3">
    <location>
        <begin position="580"/>
        <end position="609"/>
    </location>
</feature>
<feature type="region of interest" description="Disordered" evidence="3">
    <location>
        <begin position="733"/>
        <end position="755"/>
    </location>
</feature>
<feature type="region of interest" description="Disordered" evidence="3">
    <location>
        <begin position="783"/>
        <end position="1172"/>
    </location>
</feature>
<feature type="region of interest" description="Disordered" evidence="3">
    <location>
        <begin position="1197"/>
        <end position="1319"/>
    </location>
</feature>
<feature type="region of interest" description="Disordered" evidence="3">
    <location>
        <begin position="1569"/>
        <end position="1594"/>
    </location>
</feature>
<feature type="compositionally biased region" description="Basic and acidic residues" evidence="3">
    <location>
        <begin position="69"/>
        <end position="78"/>
    </location>
</feature>
<feature type="compositionally biased region" description="Low complexity" evidence="3">
    <location>
        <begin position="144"/>
        <end position="181"/>
    </location>
</feature>
<feature type="compositionally biased region" description="Low complexity" evidence="3">
    <location>
        <begin position="212"/>
        <end position="244"/>
    </location>
</feature>
<feature type="compositionally biased region" description="Basic and acidic residues" evidence="3">
    <location>
        <begin position="429"/>
        <end position="442"/>
    </location>
</feature>
<feature type="compositionally biased region" description="Acidic residues" evidence="3">
    <location>
        <begin position="444"/>
        <end position="455"/>
    </location>
</feature>
<feature type="compositionally biased region" description="Low complexity" evidence="3">
    <location>
        <begin position="464"/>
        <end position="484"/>
    </location>
</feature>
<feature type="compositionally biased region" description="Basic residues" evidence="3">
    <location>
        <begin position="492"/>
        <end position="501"/>
    </location>
</feature>
<feature type="compositionally biased region" description="Low complexity" evidence="3">
    <location>
        <begin position="502"/>
        <end position="532"/>
    </location>
</feature>
<feature type="compositionally biased region" description="Gly residues" evidence="3">
    <location>
        <begin position="582"/>
        <end position="591"/>
    </location>
</feature>
<feature type="compositionally biased region" description="Polar residues" evidence="3">
    <location>
        <begin position="598"/>
        <end position="609"/>
    </location>
</feature>
<feature type="compositionally biased region" description="Low complexity" evidence="3">
    <location>
        <begin position="733"/>
        <end position="752"/>
    </location>
</feature>
<feature type="compositionally biased region" description="Polar residues" evidence="3">
    <location>
        <begin position="783"/>
        <end position="796"/>
    </location>
</feature>
<feature type="compositionally biased region" description="Basic residues" evidence="3">
    <location>
        <begin position="810"/>
        <end position="820"/>
    </location>
</feature>
<feature type="compositionally biased region" description="Low complexity" evidence="3">
    <location>
        <begin position="868"/>
        <end position="906"/>
    </location>
</feature>
<feature type="compositionally biased region" description="Polar residues" evidence="3">
    <location>
        <begin position="917"/>
        <end position="927"/>
    </location>
</feature>
<feature type="compositionally biased region" description="Low complexity" evidence="3">
    <location>
        <begin position="957"/>
        <end position="973"/>
    </location>
</feature>
<feature type="compositionally biased region" description="Low complexity" evidence="3">
    <location>
        <begin position="1001"/>
        <end position="1012"/>
    </location>
</feature>
<feature type="compositionally biased region" description="Polar residues" evidence="3">
    <location>
        <begin position="1019"/>
        <end position="1030"/>
    </location>
</feature>
<feature type="compositionally biased region" description="Low complexity" evidence="3">
    <location>
        <begin position="1042"/>
        <end position="1068"/>
    </location>
</feature>
<feature type="compositionally biased region" description="Basic and acidic residues" evidence="3">
    <location>
        <begin position="1073"/>
        <end position="1090"/>
    </location>
</feature>
<feature type="compositionally biased region" description="Pro residues" evidence="3">
    <location>
        <begin position="1130"/>
        <end position="1140"/>
    </location>
</feature>
<feature type="compositionally biased region" description="Polar residues" evidence="3">
    <location>
        <begin position="1198"/>
        <end position="1213"/>
    </location>
</feature>
<feature type="compositionally biased region" description="Basic and acidic residues" evidence="3">
    <location>
        <begin position="1234"/>
        <end position="1251"/>
    </location>
</feature>
<feature type="compositionally biased region" description="Basic and acidic residues" evidence="3">
    <location>
        <begin position="1260"/>
        <end position="1288"/>
    </location>
</feature>
<feature type="compositionally biased region" description="Low complexity" evidence="3">
    <location>
        <begin position="1569"/>
        <end position="1589"/>
    </location>
</feature>
<feature type="modified residue" description="Phosphothreonine" evidence="1">
    <location>
        <position position="421"/>
    </location>
</feature>
<feature type="modified residue" description="Phosphoserine" evidence="1">
    <location>
        <position position="451"/>
    </location>
</feature>
<feature type="modified residue" description="Phosphoserine" evidence="1">
    <location>
        <position position="453"/>
    </location>
</feature>
<feature type="modified residue" description="Phosphoserine" evidence="1">
    <location>
        <position position="829"/>
    </location>
</feature>
<feature type="modified residue" description="Phosphoserine" evidence="1">
    <location>
        <position position="830"/>
    </location>
</feature>
<feature type="modified residue" description="Phosphoserine" evidence="1">
    <location>
        <position position="879"/>
    </location>
</feature>
<feature type="modified residue" description="Phosphoserine" evidence="1">
    <location>
        <position position="881"/>
    </location>
</feature>
<feature type="modified residue" description="Phosphoserine" evidence="1">
    <location>
        <position position="1368"/>
    </location>
</feature>
<feature type="modified residue" description="Phosphothreonine" evidence="1">
    <location>
        <position position="1370"/>
    </location>
</feature>
<name>AFFL_DROER</name>
<proteinExistence type="inferred from homology"/>
<protein>
    <recommendedName>
        <fullName evidence="1">AF4/FMR2 family member lilli</fullName>
    </recommendedName>
    <alternativeName>
        <fullName evidence="1">Protein lilliputian</fullName>
    </alternativeName>
</protein>
<sequence length="1679" mass="180421">MAQQQQQQLQQQQQHHTSSINNNNNSILLLQQQQPQQQQQLDQLQQYNNNLYSQNYNMEEYERRKRREREKIERQQGIQIDDRETSLFGEPRRVTEGDAEITAALGEFFEARVYINNQTVGISRSAPGAGNPRLQPNMPPQGKSLGHSPSSASASAAAGPTSASATTALPGQQQQHYQQQQRPPTYVKQADNKPPYNGRGGYPGQPMKNDIPSSSGMAPPRGPPRSSSSNSNSSSATNNASSGGVPASTPLGPPLSTQMPNGREKSFLGPPAPALHNGTGGRFVPPAASKRPGVGQQPPPPEKDVNKIISDIANIFTVQPLTLIAATPHAPTRENYNLLAPNKQKYAMDIPSSPPSAEPSSLMTPLFAPIASPIAPLVTTPPQASQLPLGGATSGTILAGEALAPLHQLPPTPPKAASGVTSPGPGKPLKTEKNHSLEKQDSCLENDLELSESEDEQRKKEGRSAGNSSNSSESDSSESGSESSSKNDPQHHPNHQQHHHQLQQQQQQQQQQASMQQQQVLQQQQQHRPQPLTSNGAQNKKFRHEIIARGSNTITGLLSSSGFGSGGSVGPAGLNSSAAMGAGSGSGGTLSSGGSSSNKTPSPTESNKWNLSRFFHKPANQTNSENVSPGNVSMKVPGILPGGAQIIPESIDVTTAIVKNEKIHDDHMAMEDGEEEDDDEEQQLRYGGGLSVTPVAVKKEAIDAVSEMALGAIPKTQIKRESAEALLSARLSDSGTSASGSSSSSSSSSDSAVGGEVVPKLGLGEILQLPGVPAAITTVMRVQPTQSQKAPPSNSVTLTPILPLPTSPKQRQKKPRKKKAVTSAPILDSSDDDEPPPKHPGLDHTAVSVQTPPAADTVKKGRGRPRKQQQSGGSGNLSSASAGSSSQTKGPTLTAAKKPLAKTPLAMSRARKREHSSQSSSNGNTPTKKVATPQLVAAPLKPTSVTAGSSSSDEDSSSSAESSSKSSSSSSSSDDTETQNTNCRIVKLNKTGAVQKKALLGSGSSSPSSSGSEPEDQTTRSQVGSGQALAQQLPPYKQLPISQHSQHLSSSECSSSSGGCTAVCSSSSGEEDEGRREKERERKPKSDKNKISTLTRIFNPKEGGAKKQGQVVIVDLQEEQQQGKLDAAAQPPPPQAPPAAPAAIMAKPRMTPTQQQQLGAGLASPARTTTPHLTSLICKIDLSKLSRERIMRLKKLTPAQQNGHLTPKDQATNAVHVPNGYAGDTNPATKVKHEHPVKPEPELDAGYEAKFKPGNVKQEFQLKQERDRDRERERERERERDREREQPPGRRRKRSSSSSSSPYKEKKRKKEKADQLQIGKELLPVPVLLPSNNHERMPNHDRLSYDKLQLLHEDAAAVIGDVSAANGSPTKKMMVMSPLPPPPTVTVAPATCNEAVQTTPPSATTASATAPPVPATRLIYRSYFDRDVEHPSDDPRKNNQFLQEAISRKHAADLERDSFNQVTLYLEAVVYFLLTADAMERCSSEQATNTMYKDTLSLIKFISTKFRPYQQQSTTNIQHETHNKVAILSLRCQSLISLKLYKLRRKDCRAVINSLADFFRVGRGDIANGNTPSSISPSNSVGSQGSGSNTPPGRIVPPDIHNMLCKENEFLSYLNSAHELWDQADRLVRTGNHIDFIRELDHENGPLTLHSTMHEVFRYVQAGLKTLRDAVSHPTHQSQ</sequence>
<dbReference type="EMBL" id="CH954177">
    <property type="protein sequence ID" value="EDV57550.1"/>
    <property type="molecule type" value="Genomic_DNA"/>
</dbReference>
<dbReference type="SMR" id="B3NAM7"/>
<dbReference type="EnsemblMetazoa" id="FBtr0144953">
    <property type="protein sequence ID" value="FBpp0143445"/>
    <property type="gene ID" value="FBgn0117028"/>
</dbReference>
<dbReference type="EnsemblMetazoa" id="XM_001968455.3">
    <property type="protein sequence ID" value="XP_001968491.1"/>
    <property type="gene ID" value="LOC6541908"/>
</dbReference>
<dbReference type="GeneID" id="6541908"/>
<dbReference type="KEGG" id="der:6541908"/>
<dbReference type="eggNOG" id="ENOG502QR32">
    <property type="taxonomic scope" value="Eukaryota"/>
</dbReference>
<dbReference type="HOGENOM" id="CLU_241798_0_0_1"/>
<dbReference type="OMA" id="NMEATWT"/>
<dbReference type="OrthoDB" id="6382204at2759"/>
<dbReference type="PhylomeDB" id="B3NAM7"/>
<dbReference type="ChiTaRS" id="lilli">
    <property type="organism name" value="fly"/>
</dbReference>
<dbReference type="Proteomes" id="UP000008711">
    <property type="component" value="Unassembled WGS sequence"/>
</dbReference>
<dbReference type="GO" id="GO:0005634">
    <property type="term" value="C:nucleus"/>
    <property type="evidence" value="ECO:0000250"/>
    <property type="project" value="UniProtKB"/>
</dbReference>
<dbReference type="GO" id="GO:0032783">
    <property type="term" value="C:super elongation complex"/>
    <property type="evidence" value="ECO:0007669"/>
    <property type="project" value="TreeGrafter"/>
</dbReference>
<dbReference type="GO" id="GO:0003677">
    <property type="term" value="F:DNA binding"/>
    <property type="evidence" value="ECO:0007669"/>
    <property type="project" value="UniProtKB-KW"/>
</dbReference>
<dbReference type="GO" id="GO:0003712">
    <property type="term" value="F:transcription coregulator activity"/>
    <property type="evidence" value="ECO:0000250"/>
    <property type="project" value="UniProtKB"/>
</dbReference>
<dbReference type="GO" id="GO:0007366">
    <property type="term" value="P:periodic partitioning by pair rule gene"/>
    <property type="evidence" value="ECO:0000250"/>
    <property type="project" value="UniProtKB"/>
</dbReference>
<dbReference type="GO" id="GO:0051493">
    <property type="term" value="P:regulation of cytoskeleton organization"/>
    <property type="evidence" value="ECO:0000250"/>
    <property type="project" value="UniProtKB"/>
</dbReference>
<dbReference type="GO" id="GO:0006355">
    <property type="term" value="P:regulation of DNA-templated transcription"/>
    <property type="evidence" value="ECO:0000250"/>
    <property type="project" value="UniProtKB"/>
</dbReference>
<dbReference type="GO" id="GO:0032368">
    <property type="term" value="P:regulation of lipid transport"/>
    <property type="evidence" value="ECO:0000250"/>
    <property type="project" value="UniProtKB"/>
</dbReference>
<dbReference type="InterPro" id="IPR007797">
    <property type="entry name" value="AF4/FMR2"/>
</dbReference>
<dbReference type="InterPro" id="IPR043640">
    <property type="entry name" value="AF4/FMR2_CHD"/>
</dbReference>
<dbReference type="PANTHER" id="PTHR10528">
    <property type="entry name" value="AF4/FMR2 FAMILY MEMBER"/>
    <property type="match status" value="1"/>
</dbReference>
<dbReference type="PANTHER" id="PTHR10528:SF17">
    <property type="entry name" value="AF4_FMR2 FAMILY MEMBER LILLI"/>
    <property type="match status" value="1"/>
</dbReference>
<dbReference type="Pfam" id="PF18876">
    <property type="entry name" value="AFF4_CHD"/>
    <property type="match status" value="1"/>
</dbReference>
<dbReference type="PROSITE" id="PS00354">
    <property type="entry name" value="HMGI_Y"/>
    <property type="match status" value="1"/>
</dbReference>
<reference evidence="4" key="1">
    <citation type="journal article" date="2007" name="Nature">
        <title>Evolution of genes and genomes on the Drosophila phylogeny.</title>
        <authorList>
            <consortium name="Drosophila 12 genomes consortium"/>
        </authorList>
    </citation>
    <scope>NUCLEOTIDE SEQUENCE [LARGE SCALE GENOMIC DNA]</scope>
    <source>
        <strain evidence="4">Tucson 14021-0224.01</strain>
    </source>
</reference>
<evidence type="ECO:0000250" key="1">
    <source>
        <dbReference type="UniProtKB" id="Q9VQI9"/>
    </source>
</evidence>
<evidence type="ECO:0000255" key="2"/>
<evidence type="ECO:0000256" key="3">
    <source>
        <dbReference type="SAM" id="MobiDB-lite"/>
    </source>
</evidence>
<evidence type="ECO:0000312" key="4">
    <source>
        <dbReference type="EMBL" id="EDV57550.1"/>
    </source>
</evidence>
<comment type="function">
    <text evidence="1">Has a role in transcriptional regulation. Acts in parallel with the Ras/MAPK and the PI3K/PKB pathways in the control of cell identity and cellular growth. Essential for regulation of the cytoskeleton and cell growth but not for cell proliferation or growth rate. Required specifically for the microtubule-based basal transport of lipid droplets. Plays a partially redundant function downstream of Raf in cell fate specification in the developing eye. Pair-rule protein that regulates embryonic cellularization, gastrulation and segmentation (By similarity).</text>
</comment>
<comment type="subcellular location">
    <subcellularLocation>
        <location evidence="1">Nucleus</location>
    </subcellularLocation>
</comment>
<comment type="similarity">
    <text evidence="2">Belongs to the AF4 family.</text>
</comment>
<keyword id="KW-0217">Developmental protein</keyword>
<keyword id="KW-0238">DNA-binding</keyword>
<keyword id="KW-0539">Nucleus</keyword>
<keyword id="KW-0562">Pair-rule protein</keyword>
<keyword id="KW-0597">Phosphoprotein</keyword>
<keyword id="KW-0804">Transcription</keyword>
<keyword id="KW-0805">Transcription regulation</keyword>
<accession>B3NAM7</accession>
<gene>
    <name evidence="1" type="primary">lilli</name>
    <name type="ORF">GG24899</name>
</gene>
<organism>
    <name type="scientific">Drosophila erecta</name>
    <name type="common">Fruit fly</name>
    <dbReference type="NCBI Taxonomy" id="7220"/>
    <lineage>
        <taxon>Eukaryota</taxon>
        <taxon>Metazoa</taxon>
        <taxon>Ecdysozoa</taxon>
        <taxon>Arthropoda</taxon>
        <taxon>Hexapoda</taxon>
        <taxon>Insecta</taxon>
        <taxon>Pterygota</taxon>
        <taxon>Neoptera</taxon>
        <taxon>Endopterygota</taxon>
        <taxon>Diptera</taxon>
        <taxon>Brachycera</taxon>
        <taxon>Muscomorpha</taxon>
        <taxon>Ephydroidea</taxon>
        <taxon>Drosophilidae</taxon>
        <taxon>Drosophila</taxon>
        <taxon>Sophophora</taxon>
    </lineage>
</organism>